<feature type="chain" id="PRO_0000256157" description="tRNA (adenine(58)-N(1))-methyltransferase non-catalytic subunit TRM6">
    <location>
        <begin position="1"/>
        <end position="459"/>
    </location>
</feature>
<comment type="function">
    <text evidence="1">Substrate-binding subunit of tRNA (adenine-N(1)-)-methyltransferase, which catalyzes the formation of N(1)-methyladenine at position 58 (m1A58) in initiator methionyl-tRNA.</text>
</comment>
<comment type="subunit">
    <text evidence="1">Heterotetramer; composed of two copies of TRM6 and two copies of TRM61.</text>
</comment>
<comment type="subcellular location">
    <subcellularLocation>
        <location evidence="1">Nucleus</location>
    </subcellularLocation>
</comment>
<comment type="similarity">
    <text evidence="2">Belongs to the TRM6/GCD10 family.</text>
</comment>
<gene>
    <name type="primary">TRM6</name>
    <name type="ordered locus">ADL255C</name>
</gene>
<organism>
    <name type="scientific">Eremothecium gossypii (strain ATCC 10895 / CBS 109.51 / FGSC 9923 / NRRL Y-1056)</name>
    <name type="common">Yeast</name>
    <name type="synonym">Ashbya gossypii</name>
    <dbReference type="NCBI Taxonomy" id="284811"/>
    <lineage>
        <taxon>Eukaryota</taxon>
        <taxon>Fungi</taxon>
        <taxon>Dikarya</taxon>
        <taxon>Ascomycota</taxon>
        <taxon>Saccharomycotina</taxon>
        <taxon>Saccharomycetes</taxon>
        <taxon>Saccharomycetales</taxon>
        <taxon>Saccharomycetaceae</taxon>
        <taxon>Eremothecium</taxon>
    </lineage>
</organism>
<name>TRM6_EREGS</name>
<reference key="1">
    <citation type="journal article" date="2004" name="Science">
        <title>The Ashbya gossypii genome as a tool for mapping the ancient Saccharomyces cerevisiae genome.</title>
        <authorList>
            <person name="Dietrich F.S."/>
            <person name="Voegeli S."/>
            <person name="Brachat S."/>
            <person name="Lerch A."/>
            <person name="Gates K."/>
            <person name="Steiner S."/>
            <person name="Mohr C."/>
            <person name="Poehlmann R."/>
            <person name="Luedi P."/>
            <person name="Choi S."/>
            <person name="Wing R.A."/>
            <person name="Flavier A."/>
            <person name="Gaffney T.D."/>
            <person name="Philippsen P."/>
        </authorList>
    </citation>
    <scope>NUCLEOTIDE SEQUENCE [LARGE SCALE GENOMIC DNA]</scope>
    <source>
        <strain>ATCC 10895 / CBS 109.51 / FGSC 9923 / NRRL Y-1056</strain>
    </source>
</reference>
<reference key="2">
    <citation type="journal article" date="2013" name="G3 (Bethesda)">
        <title>Genomes of Ashbya fungi isolated from insects reveal four mating-type loci, numerous translocations, lack of transposons, and distinct gene duplications.</title>
        <authorList>
            <person name="Dietrich F.S."/>
            <person name="Voegeli S."/>
            <person name="Kuo S."/>
            <person name="Philippsen P."/>
        </authorList>
    </citation>
    <scope>GENOME REANNOTATION</scope>
    <source>
        <strain>ATCC 10895 / CBS 109.51 / FGSC 9923 / NRRL Y-1056</strain>
    </source>
</reference>
<evidence type="ECO:0000250" key="1">
    <source>
        <dbReference type="UniProtKB" id="P41814"/>
    </source>
</evidence>
<evidence type="ECO:0000305" key="2"/>
<keyword id="KW-0539">Nucleus</keyword>
<keyword id="KW-1185">Reference proteome</keyword>
<keyword id="KW-0694">RNA-binding</keyword>
<keyword id="KW-0819">tRNA processing</keyword>
<sequence length="459" mass="51413">MDPLRQLVLNQHILVRLPSDNLKIVELKPNGVISLGKFGACHVNDIIGYPLGTTFEIWYEGDETEVVRGSTVVIGKVRVLENRAEAQVGSEGATPQPAELTQVESSKTNMELLDLGHKVQKLDHKEIERMKQDVTAGDSIISMMIQSHETFHKKTIHSQEKYLKRKKQKFAKFFTAEYLGSSGLLRYLIEKGDMQRIMDLSEESLGMALNLANIRSNGTYLCMDETGGLIVYAMLERMFGGHEAQHGGTIVVVHENEHPNLDLLKFSNYSEEFIGKHVKTVSLLQYFEPPTVEEVEASFTPLDDAQLREMKSNKKGAYYRRLKRYNSDLEVIRLASQITYDALIVASTLQLSTLVPRLAGKVHGSRPIVCYSQFRETLLELSHTLYDSLHFLAPTLLETRCRPYQTVRGKLHPLMTMRGGGGYLLWCHKVIPADNGAGKIDCDNAAAPACPAAQPDEAP</sequence>
<dbReference type="EMBL" id="AE016817">
    <property type="protein sequence ID" value="AAS51665.1"/>
    <property type="molecule type" value="Genomic_DNA"/>
</dbReference>
<dbReference type="RefSeq" id="NP_983841.1">
    <property type="nucleotide sequence ID" value="NM_209194.1"/>
</dbReference>
<dbReference type="SMR" id="Q75B32"/>
<dbReference type="FunCoup" id="Q75B32">
    <property type="interactions" value="986"/>
</dbReference>
<dbReference type="STRING" id="284811.Q75B32"/>
<dbReference type="EnsemblFungi" id="AAS51665">
    <property type="protein sequence ID" value="AAS51665"/>
    <property type="gene ID" value="AGOS_ADL255C"/>
</dbReference>
<dbReference type="GeneID" id="4619976"/>
<dbReference type="KEGG" id="ago:AGOS_ADL255C"/>
<dbReference type="eggNOG" id="KOG1416">
    <property type="taxonomic scope" value="Eukaryota"/>
</dbReference>
<dbReference type="HOGENOM" id="CLU_010916_1_1_1"/>
<dbReference type="InParanoid" id="Q75B32"/>
<dbReference type="OMA" id="TRCRPYQ"/>
<dbReference type="OrthoDB" id="10254665at2759"/>
<dbReference type="Proteomes" id="UP000000591">
    <property type="component" value="Chromosome IV"/>
</dbReference>
<dbReference type="GO" id="GO:0005634">
    <property type="term" value="C:nucleus"/>
    <property type="evidence" value="ECO:0000318"/>
    <property type="project" value="GO_Central"/>
</dbReference>
<dbReference type="GO" id="GO:0031515">
    <property type="term" value="C:tRNA (m1A) methyltransferase complex"/>
    <property type="evidence" value="ECO:0000318"/>
    <property type="project" value="GO_Central"/>
</dbReference>
<dbReference type="GO" id="GO:0003723">
    <property type="term" value="F:RNA binding"/>
    <property type="evidence" value="ECO:0007669"/>
    <property type="project" value="UniProtKB-KW"/>
</dbReference>
<dbReference type="GO" id="GO:0160107">
    <property type="term" value="F:tRNA (adenine(58)-N1)-methyltransferase activity"/>
    <property type="evidence" value="ECO:0007669"/>
    <property type="project" value="EnsemblFungi"/>
</dbReference>
<dbReference type="GO" id="GO:0030488">
    <property type="term" value="P:tRNA methylation"/>
    <property type="evidence" value="ECO:0007669"/>
    <property type="project" value="EnsemblFungi"/>
</dbReference>
<dbReference type="InterPro" id="IPR017423">
    <property type="entry name" value="TRM6"/>
</dbReference>
<dbReference type="PANTHER" id="PTHR12945">
    <property type="entry name" value="TRANSLATION INITIATION FACTOR EIF3-RELATED"/>
    <property type="match status" value="1"/>
</dbReference>
<dbReference type="PANTHER" id="PTHR12945:SF0">
    <property type="entry name" value="TRNA (ADENINE(58)-N(1))-METHYLTRANSFERASE NON-CATALYTIC SUBUNIT TRM6"/>
    <property type="match status" value="1"/>
</dbReference>
<dbReference type="Pfam" id="PF04189">
    <property type="entry name" value="Gcd10p"/>
    <property type="match status" value="1"/>
</dbReference>
<dbReference type="PIRSF" id="PIRSF038170">
    <property type="entry name" value="tRNA_m1A_mtfrase"/>
    <property type="match status" value="1"/>
</dbReference>
<accession>Q75B32</accession>
<protein>
    <recommendedName>
        <fullName>tRNA (adenine(58)-N(1))-methyltransferase non-catalytic subunit TRM6</fullName>
    </recommendedName>
    <alternativeName>
        <fullName>tRNA(m1A58)-methyltransferase subunit TRM6</fullName>
        <shortName>tRNA(m1A58)MTase subunit TRM6</shortName>
    </alternativeName>
</protein>
<proteinExistence type="inferred from homology"/>